<protein>
    <recommendedName>
        <fullName>Uncharacterized protein At4g17910</fullName>
    </recommendedName>
</protein>
<dbReference type="EMBL" id="AL021889">
    <property type="protein sequence ID" value="CAA17134.1"/>
    <property type="status" value="ALT_SEQ"/>
    <property type="molecule type" value="Genomic_DNA"/>
</dbReference>
<dbReference type="EMBL" id="AL161547">
    <property type="protein sequence ID" value="CAB78793.1"/>
    <property type="status" value="ALT_SEQ"/>
    <property type="molecule type" value="Genomic_DNA"/>
</dbReference>
<dbReference type="EMBL" id="CP002687">
    <property type="protein sequence ID" value="AEE83967.1"/>
    <property type="molecule type" value="Genomic_DNA"/>
</dbReference>
<dbReference type="EMBL" id="CP002687">
    <property type="protein sequence ID" value="ANM66934.1"/>
    <property type="molecule type" value="Genomic_DNA"/>
</dbReference>
<dbReference type="EMBL" id="BX835579">
    <property type="status" value="NOT_ANNOTATED_CDS"/>
    <property type="molecule type" value="mRNA"/>
</dbReference>
<dbReference type="EMBL" id="BX839372">
    <property type="status" value="NOT_ANNOTATED_CDS"/>
    <property type="molecule type" value="mRNA"/>
</dbReference>
<dbReference type="PIR" id="T05077">
    <property type="entry name" value="T05077"/>
</dbReference>
<dbReference type="RefSeq" id="NP_001328798.1">
    <property type="nucleotide sequence ID" value="NM_001341246.1"/>
</dbReference>
<dbReference type="RefSeq" id="NP_193525.5">
    <property type="nucleotide sequence ID" value="NM_117901.6"/>
</dbReference>
<dbReference type="SMR" id="B3H6K1"/>
<dbReference type="BioGRID" id="12808">
    <property type="interactions" value="1"/>
</dbReference>
<dbReference type="FunCoup" id="B3H6K1">
    <property type="interactions" value="3050"/>
</dbReference>
<dbReference type="STRING" id="3702.B3H6K1"/>
<dbReference type="PaxDb" id="3702-AT4G17910.1"/>
<dbReference type="ProteomicsDB" id="242856"/>
<dbReference type="EnsemblPlants" id="AT4G17910.1">
    <property type="protein sequence ID" value="AT4G17910.1"/>
    <property type="gene ID" value="AT4G17910"/>
</dbReference>
<dbReference type="EnsemblPlants" id="AT4G17910.2">
    <property type="protein sequence ID" value="AT4G17910.2"/>
    <property type="gene ID" value="AT4G17910"/>
</dbReference>
<dbReference type="GeneID" id="827515"/>
<dbReference type="Gramene" id="AT4G17910.1">
    <property type="protein sequence ID" value="AT4G17910.1"/>
    <property type="gene ID" value="AT4G17910"/>
</dbReference>
<dbReference type="Gramene" id="AT4G17910.2">
    <property type="protein sequence ID" value="AT4G17910.2"/>
    <property type="gene ID" value="AT4G17910"/>
</dbReference>
<dbReference type="KEGG" id="ath:AT4G17910"/>
<dbReference type="Araport" id="AT4G17910"/>
<dbReference type="TAIR" id="AT4G17910"/>
<dbReference type="eggNOG" id="KOG0411">
    <property type="taxonomic scope" value="Eukaryota"/>
</dbReference>
<dbReference type="HOGENOM" id="CLU_020802_2_2_1"/>
<dbReference type="InParanoid" id="B3H6K1"/>
<dbReference type="PRO" id="PR:B3H6K1"/>
<dbReference type="Proteomes" id="UP000006548">
    <property type="component" value="Chromosome 4"/>
</dbReference>
<dbReference type="ExpressionAtlas" id="B3H6K1">
    <property type="expression patterns" value="baseline and differential"/>
</dbReference>
<dbReference type="GO" id="GO:0016020">
    <property type="term" value="C:membrane"/>
    <property type="evidence" value="ECO:0007669"/>
    <property type="project" value="UniProtKB-SubCell"/>
</dbReference>
<dbReference type="GO" id="GO:0008374">
    <property type="term" value="F:O-acyltransferase activity"/>
    <property type="evidence" value="ECO:0007669"/>
    <property type="project" value="UniProtKB-ARBA"/>
</dbReference>
<dbReference type="GO" id="GO:0006506">
    <property type="term" value="P:GPI anchor biosynthetic process"/>
    <property type="evidence" value="ECO:0007669"/>
    <property type="project" value="InterPro"/>
</dbReference>
<dbReference type="InterPro" id="IPR009447">
    <property type="entry name" value="PIGW/GWT1"/>
</dbReference>
<dbReference type="PANTHER" id="PTHR20661">
    <property type="entry name" value="PHOSPHATIDYLINOSITOL-GLYCAN BIOSYNTHESIS CLASS W PROTEIN"/>
    <property type="match status" value="1"/>
</dbReference>
<dbReference type="PANTHER" id="PTHR20661:SF0">
    <property type="entry name" value="PHOSPHATIDYLINOSITOL-GLYCAN BIOSYNTHESIS CLASS W PROTEIN"/>
    <property type="match status" value="1"/>
</dbReference>
<dbReference type="Pfam" id="PF06423">
    <property type="entry name" value="GWT1"/>
    <property type="match status" value="1"/>
</dbReference>
<dbReference type="PIRSF" id="PIRSF017321">
    <property type="entry name" value="GWT1"/>
    <property type="match status" value="1"/>
</dbReference>
<reference key="1">
    <citation type="journal article" date="1999" name="Nature">
        <title>Sequence and analysis of chromosome 4 of the plant Arabidopsis thaliana.</title>
        <authorList>
            <person name="Mayer K.F.X."/>
            <person name="Schueller C."/>
            <person name="Wambutt R."/>
            <person name="Murphy G."/>
            <person name="Volckaert G."/>
            <person name="Pohl T."/>
            <person name="Duesterhoeft A."/>
            <person name="Stiekema W."/>
            <person name="Entian K.-D."/>
            <person name="Terryn N."/>
            <person name="Harris B."/>
            <person name="Ansorge W."/>
            <person name="Brandt P."/>
            <person name="Grivell L.A."/>
            <person name="Rieger M."/>
            <person name="Weichselgartner M."/>
            <person name="de Simone V."/>
            <person name="Obermaier B."/>
            <person name="Mache R."/>
            <person name="Mueller M."/>
            <person name="Kreis M."/>
            <person name="Delseny M."/>
            <person name="Puigdomenech P."/>
            <person name="Watson M."/>
            <person name="Schmidtheini T."/>
            <person name="Reichert B."/>
            <person name="Portetelle D."/>
            <person name="Perez-Alonso M."/>
            <person name="Boutry M."/>
            <person name="Bancroft I."/>
            <person name="Vos P."/>
            <person name="Hoheisel J."/>
            <person name="Zimmermann W."/>
            <person name="Wedler H."/>
            <person name="Ridley P."/>
            <person name="Langham S.-A."/>
            <person name="McCullagh B."/>
            <person name="Bilham L."/>
            <person name="Robben J."/>
            <person name="van der Schueren J."/>
            <person name="Grymonprez B."/>
            <person name="Chuang Y.-J."/>
            <person name="Vandenbussche F."/>
            <person name="Braeken M."/>
            <person name="Weltjens I."/>
            <person name="Voet M."/>
            <person name="Bastiaens I."/>
            <person name="Aert R."/>
            <person name="Defoor E."/>
            <person name="Weitzenegger T."/>
            <person name="Bothe G."/>
            <person name="Ramsperger U."/>
            <person name="Hilbert H."/>
            <person name="Braun M."/>
            <person name="Holzer E."/>
            <person name="Brandt A."/>
            <person name="Peters S."/>
            <person name="van Staveren M."/>
            <person name="Dirkse W."/>
            <person name="Mooijman P."/>
            <person name="Klein Lankhorst R."/>
            <person name="Rose M."/>
            <person name="Hauf J."/>
            <person name="Koetter P."/>
            <person name="Berneiser S."/>
            <person name="Hempel S."/>
            <person name="Feldpausch M."/>
            <person name="Lamberth S."/>
            <person name="Van den Daele H."/>
            <person name="De Keyser A."/>
            <person name="Buysshaert C."/>
            <person name="Gielen J."/>
            <person name="Villarroel R."/>
            <person name="De Clercq R."/>
            <person name="van Montagu M."/>
            <person name="Rogers J."/>
            <person name="Cronin A."/>
            <person name="Quail M.A."/>
            <person name="Bray-Allen S."/>
            <person name="Clark L."/>
            <person name="Doggett J."/>
            <person name="Hall S."/>
            <person name="Kay M."/>
            <person name="Lennard N."/>
            <person name="McLay K."/>
            <person name="Mayes R."/>
            <person name="Pettett A."/>
            <person name="Rajandream M.A."/>
            <person name="Lyne M."/>
            <person name="Benes V."/>
            <person name="Rechmann S."/>
            <person name="Borkova D."/>
            <person name="Bloecker H."/>
            <person name="Scharfe M."/>
            <person name="Grimm M."/>
            <person name="Loehnert T.-H."/>
            <person name="Dose S."/>
            <person name="de Haan M."/>
            <person name="Maarse A.C."/>
            <person name="Schaefer M."/>
            <person name="Mueller-Auer S."/>
            <person name="Gabel C."/>
            <person name="Fuchs M."/>
            <person name="Fartmann B."/>
            <person name="Granderath K."/>
            <person name="Dauner D."/>
            <person name="Herzl A."/>
            <person name="Neumann S."/>
            <person name="Argiriou A."/>
            <person name="Vitale D."/>
            <person name="Liguori R."/>
            <person name="Piravandi E."/>
            <person name="Massenet O."/>
            <person name="Quigley F."/>
            <person name="Clabauld G."/>
            <person name="Muendlein A."/>
            <person name="Felber R."/>
            <person name="Schnabl S."/>
            <person name="Hiller R."/>
            <person name="Schmidt W."/>
            <person name="Lecharny A."/>
            <person name="Aubourg S."/>
            <person name="Chefdor F."/>
            <person name="Cooke R."/>
            <person name="Berger C."/>
            <person name="Monfort A."/>
            <person name="Casacuberta E."/>
            <person name="Gibbons T."/>
            <person name="Weber N."/>
            <person name="Vandenbol M."/>
            <person name="Bargues M."/>
            <person name="Terol J."/>
            <person name="Torres A."/>
            <person name="Perez-Perez A."/>
            <person name="Purnelle B."/>
            <person name="Bent E."/>
            <person name="Johnson S."/>
            <person name="Tacon D."/>
            <person name="Jesse T."/>
            <person name="Heijnen L."/>
            <person name="Schwarz S."/>
            <person name="Scholler P."/>
            <person name="Heber S."/>
            <person name="Francs P."/>
            <person name="Bielke C."/>
            <person name="Frishman D."/>
            <person name="Haase D."/>
            <person name="Lemcke K."/>
            <person name="Mewes H.-W."/>
            <person name="Stocker S."/>
            <person name="Zaccaria P."/>
            <person name="Bevan M."/>
            <person name="Wilson R.K."/>
            <person name="de la Bastide M."/>
            <person name="Habermann K."/>
            <person name="Parnell L."/>
            <person name="Dedhia N."/>
            <person name="Gnoj L."/>
            <person name="Schutz K."/>
            <person name="Huang E."/>
            <person name="Spiegel L."/>
            <person name="Sekhon M."/>
            <person name="Murray J."/>
            <person name="Sheet P."/>
            <person name="Cordes M."/>
            <person name="Abu-Threideh J."/>
            <person name="Stoneking T."/>
            <person name="Kalicki J."/>
            <person name="Graves T."/>
            <person name="Harmon G."/>
            <person name="Edwards J."/>
            <person name="Latreille P."/>
            <person name="Courtney L."/>
            <person name="Cloud J."/>
            <person name="Abbott A."/>
            <person name="Scott K."/>
            <person name="Johnson D."/>
            <person name="Minx P."/>
            <person name="Bentley D."/>
            <person name="Fulton B."/>
            <person name="Miller N."/>
            <person name="Greco T."/>
            <person name="Kemp K."/>
            <person name="Kramer J."/>
            <person name="Fulton L."/>
            <person name="Mardis E."/>
            <person name="Dante M."/>
            <person name="Pepin K."/>
            <person name="Hillier L.W."/>
            <person name="Nelson J."/>
            <person name="Spieth J."/>
            <person name="Ryan E."/>
            <person name="Andrews S."/>
            <person name="Geisel C."/>
            <person name="Layman D."/>
            <person name="Du H."/>
            <person name="Ali J."/>
            <person name="Berghoff A."/>
            <person name="Jones K."/>
            <person name="Drone K."/>
            <person name="Cotton M."/>
            <person name="Joshu C."/>
            <person name="Antonoiu B."/>
            <person name="Zidanic M."/>
            <person name="Strong C."/>
            <person name="Sun H."/>
            <person name="Lamar B."/>
            <person name="Yordan C."/>
            <person name="Ma P."/>
            <person name="Zhong J."/>
            <person name="Preston R."/>
            <person name="Vil D."/>
            <person name="Shekher M."/>
            <person name="Matero A."/>
            <person name="Shah R."/>
            <person name="Swaby I.K."/>
            <person name="O'Shaughnessy A."/>
            <person name="Rodriguez M."/>
            <person name="Hoffman J."/>
            <person name="Till S."/>
            <person name="Granat S."/>
            <person name="Shohdy N."/>
            <person name="Hasegawa A."/>
            <person name="Hameed A."/>
            <person name="Lodhi M."/>
            <person name="Johnson A."/>
            <person name="Chen E."/>
            <person name="Marra M.A."/>
            <person name="Martienssen R."/>
            <person name="McCombie W.R."/>
        </authorList>
    </citation>
    <scope>NUCLEOTIDE SEQUENCE [LARGE SCALE GENOMIC DNA]</scope>
    <source>
        <strain>cv. Columbia</strain>
    </source>
</reference>
<reference key="2">
    <citation type="journal article" date="2017" name="Plant J.">
        <title>Araport11: a complete reannotation of the Arabidopsis thaliana reference genome.</title>
        <authorList>
            <person name="Cheng C.Y."/>
            <person name="Krishnakumar V."/>
            <person name="Chan A.P."/>
            <person name="Thibaud-Nissen F."/>
            <person name="Schobel S."/>
            <person name="Town C.D."/>
        </authorList>
    </citation>
    <scope>GENOME REANNOTATION</scope>
    <source>
        <strain>cv. Columbia</strain>
    </source>
</reference>
<reference key="3">
    <citation type="journal article" date="2004" name="Genome Res.">
        <title>Whole genome sequence comparisons and 'full-length' cDNA sequences: a combined approach to evaluate and improve Arabidopsis genome annotation.</title>
        <authorList>
            <person name="Castelli V."/>
            <person name="Aury J.-M."/>
            <person name="Jaillon O."/>
            <person name="Wincker P."/>
            <person name="Clepet C."/>
            <person name="Menard M."/>
            <person name="Cruaud C."/>
            <person name="Quetier F."/>
            <person name="Scarpelli C."/>
            <person name="Schaechter V."/>
            <person name="Temple G."/>
            <person name="Caboche M."/>
            <person name="Weissenbach J."/>
            <person name="Salanoubat M."/>
        </authorList>
    </citation>
    <scope>NUCLEOTIDE SEQUENCE [LARGE SCALE MRNA] OF 1-197</scope>
    <scope>NUCLEOTIDE SEQUENCE [LARGE SCALE MRNA] OF 243-434</scope>
    <source>
        <strain>cv. Columbia</strain>
    </source>
</reference>
<feature type="signal peptide" evidence="1">
    <location>
        <begin position="1"/>
        <end position="17"/>
    </location>
</feature>
<feature type="chain" id="PRO_0000355971" description="Uncharacterized protein At4g17910">
    <location>
        <begin position="18"/>
        <end position="434"/>
    </location>
</feature>
<feature type="transmembrane region" description="Helical" evidence="1">
    <location>
        <begin position="48"/>
        <end position="68"/>
    </location>
</feature>
<feature type="transmembrane region" description="Helical" evidence="1">
    <location>
        <begin position="70"/>
        <end position="90"/>
    </location>
</feature>
<feature type="transmembrane region" description="Helical" evidence="1">
    <location>
        <begin position="112"/>
        <end position="132"/>
    </location>
</feature>
<feature type="transmembrane region" description="Helical" evidence="1">
    <location>
        <begin position="141"/>
        <end position="161"/>
    </location>
</feature>
<feature type="transmembrane region" description="Helical" evidence="1">
    <location>
        <begin position="173"/>
        <end position="193"/>
    </location>
</feature>
<feature type="transmembrane region" description="Helical" evidence="1">
    <location>
        <begin position="206"/>
        <end position="226"/>
    </location>
</feature>
<feature type="transmembrane region" description="Helical" evidence="1">
    <location>
        <begin position="232"/>
        <end position="252"/>
    </location>
</feature>
<feature type="transmembrane region" description="Helical" evidence="1">
    <location>
        <begin position="271"/>
        <end position="291"/>
    </location>
</feature>
<feature type="transmembrane region" description="Helical" evidence="1">
    <location>
        <begin position="305"/>
        <end position="325"/>
    </location>
</feature>
<feature type="transmembrane region" description="Helical" evidence="1">
    <location>
        <begin position="344"/>
        <end position="364"/>
    </location>
</feature>
<feature type="transmembrane region" description="Helical" evidence="1">
    <location>
        <begin position="380"/>
        <end position="400"/>
    </location>
</feature>
<feature type="transmembrane region" description="Helical" evidence="1">
    <location>
        <begin position="404"/>
        <end position="424"/>
    </location>
</feature>
<feature type="sequence conflict" description="In Ref. 3; BX839372." evidence="2" ref="3">
    <original>I</original>
    <variation>M</variation>
    <location>
        <position position="119"/>
    </location>
</feature>
<feature type="sequence conflict" description="In Ref. 3; BX839372." evidence="2" ref="3">
    <original>A</original>
    <variation>S</variation>
    <location>
        <position position="159"/>
    </location>
</feature>
<feature type="sequence conflict" description="In Ref. 3; BX839372." evidence="2" ref="3">
    <original>W</original>
    <variation>F</variation>
    <location>
        <position position="173"/>
    </location>
</feature>
<feature type="sequence conflict" description="In Ref. 3; BX839372." evidence="2" ref="3">
    <original>GIK</original>
    <variation>FII</variation>
    <location>
        <begin position="176"/>
        <end position="178"/>
    </location>
</feature>
<feature type="sequence conflict" description="In Ref. 3; BX839372." evidence="2" ref="3">
    <original>G</original>
    <variation>F</variation>
    <location>
        <position position="187"/>
    </location>
</feature>
<proteinExistence type="evidence at transcript level"/>
<name>Y4791_ARATH</name>
<accession>B3H6K1</accession>
<accession>F4JQ10</accession>
<accession>O49690</accession>
<sequence length="434" mass="48520">MTFLLFQLLVLLRYSIGFHCKIDNNGVKSVTSKKNDDEKIVISRNWKAAISLDFIFIVFPMLLFFTVLSEWVYHGTGLLSLLVLILSVTAKRSFSGLQRGQSLSFRASVSSYRVALMLITCLCILAVDFTIFPRRYAKTETYGTSLMDLGVGSFVLANAVVSRQARDVSSGNWITGIKATAPLLLLGFIRLVTTSGVDYQVHVTEYGVHWNFFFTLAAISILTSFVNIPAKYCGLLGFAVLAGYQTWLLSGLNTYLLSDERGTDIISKNKEGVYSILGYWGMYLLGVHLGYRLFYGKHTNIRSTTSSIARVFLVSLLLWIVTILFDNYVERISRRTCNMPYVTWVLAQDLQALGIFMLSSYIPLNKLSSLEEAIDQNLLATFLLANLVTGMVNLTVDTIFASPFSSLLILTAYAFALSAIIGTIHFSGFRLKFW</sequence>
<evidence type="ECO:0000255" key="1"/>
<evidence type="ECO:0000305" key="2"/>
<organism>
    <name type="scientific">Arabidopsis thaliana</name>
    <name type="common">Mouse-ear cress</name>
    <dbReference type="NCBI Taxonomy" id="3702"/>
    <lineage>
        <taxon>Eukaryota</taxon>
        <taxon>Viridiplantae</taxon>
        <taxon>Streptophyta</taxon>
        <taxon>Embryophyta</taxon>
        <taxon>Tracheophyta</taxon>
        <taxon>Spermatophyta</taxon>
        <taxon>Magnoliopsida</taxon>
        <taxon>eudicotyledons</taxon>
        <taxon>Gunneridae</taxon>
        <taxon>Pentapetalae</taxon>
        <taxon>rosids</taxon>
        <taxon>malvids</taxon>
        <taxon>Brassicales</taxon>
        <taxon>Brassicaceae</taxon>
        <taxon>Camelineae</taxon>
        <taxon>Arabidopsis</taxon>
    </lineage>
</organism>
<comment type="subcellular location">
    <subcellularLocation>
        <location evidence="2">Membrane</location>
        <topology evidence="2">Multi-pass membrane protein</topology>
    </subcellularLocation>
</comment>
<comment type="sequence caution" evidence="2">
    <conflict type="miscellaneous discrepancy">
        <sequence resource="EMBL" id="BX835579"/>
    </conflict>
    <text>Sequencing errors.</text>
</comment>
<comment type="sequence caution" evidence="2">
    <conflict type="erroneous gene model prediction">
        <sequence resource="EMBL-CDS" id="CAA17134"/>
    </conflict>
    <text>The predicted gene has been split into 3 genes: At4g17905, At4g17910 and At4g17915.</text>
</comment>
<comment type="sequence caution" evidence="2">
    <conflict type="erroneous gene model prediction">
        <sequence resource="EMBL-CDS" id="CAB78793"/>
    </conflict>
    <text>The predicted gene has been split into 3 genes: At4g17905, At4g17910 and At4g17915.</text>
</comment>
<keyword id="KW-0472">Membrane</keyword>
<keyword id="KW-1185">Reference proteome</keyword>
<keyword id="KW-0732">Signal</keyword>
<keyword id="KW-0812">Transmembrane</keyword>
<keyword id="KW-1133">Transmembrane helix</keyword>
<gene>
    <name type="ordered locus">At4g17910</name>
    <name type="ORF">T6K21.90</name>
</gene>